<comment type="function">
    <text evidence="1">Endonuclease that specifically degrades the RNA of RNA-DNA hybrids.</text>
</comment>
<comment type="catalytic activity">
    <reaction evidence="1">
        <text>Endonucleolytic cleavage to 5'-phosphomonoester.</text>
        <dbReference type="EC" id="3.1.26.4"/>
    </reaction>
</comment>
<comment type="cofactor">
    <cofactor evidence="1">
        <name>Mg(2+)</name>
        <dbReference type="ChEBI" id="CHEBI:18420"/>
    </cofactor>
    <text evidence="1">Binds 1 Mg(2+) ion per subunit. May bind a second metal ion at a regulatory site, or after substrate binding.</text>
</comment>
<comment type="subunit">
    <text evidence="1">Monomer.</text>
</comment>
<comment type="subcellular location">
    <subcellularLocation>
        <location evidence="1">Cytoplasm</location>
    </subcellularLocation>
</comment>
<comment type="similarity">
    <text evidence="1">Belongs to the RNase H family.</text>
</comment>
<feature type="chain" id="PRO_0000332594" description="Ribonuclease H">
    <location>
        <begin position="1"/>
        <end position="146"/>
    </location>
</feature>
<feature type="domain" description="RNase H type-1" evidence="2">
    <location>
        <begin position="4"/>
        <end position="145"/>
    </location>
</feature>
<feature type="binding site" evidence="1">
    <location>
        <position position="13"/>
    </location>
    <ligand>
        <name>Mg(2+)</name>
        <dbReference type="ChEBI" id="CHEBI:18420"/>
        <label>1</label>
    </ligand>
</feature>
<feature type="binding site" evidence="1">
    <location>
        <position position="13"/>
    </location>
    <ligand>
        <name>Mg(2+)</name>
        <dbReference type="ChEBI" id="CHEBI:18420"/>
        <label>2</label>
    </ligand>
</feature>
<feature type="binding site" evidence="1">
    <location>
        <position position="51"/>
    </location>
    <ligand>
        <name>Mg(2+)</name>
        <dbReference type="ChEBI" id="CHEBI:18420"/>
        <label>1</label>
    </ligand>
</feature>
<feature type="binding site" evidence="1">
    <location>
        <position position="73"/>
    </location>
    <ligand>
        <name>Mg(2+)</name>
        <dbReference type="ChEBI" id="CHEBI:18420"/>
        <label>1</label>
    </ligand>
</feature>
<feature type="binding site" evidence="1">
    <location>
        <position position="137"/>
    </location>
    <ligand>
        <name>Mg(2+)</name>
        <dbReference type="ChEBI" id="CHEBI:18420"/>
        <label>2</label>
    </ligand>
</feature>
<name>RNH_EHRCJ</name>
<evidence type="ECO:0000255" key="1">
    <source>
        <dbReference type="HAMAP-Rule" id="MF_00042"/>
    </source>
</evidence>
<evidence type="ECO:0000255" key="2">
    <source>
        <dbReference type="PROSITE-ProRule" id="PRU00408"/>
    </source>
</evidence>
<proteinExistence type="inferred from homology"/>
<gene>
    <name evidence="1" type="primary">rnhA</name>
    <name type="ordered locus">Ecaj_0761</name>
</gene>
<protein>
    <recommendedName>
        <fullName evidence="1">Ribonuclease H</fullName>
        <shortName evidence="1">RNase H</shortName>
        <ecNumber evidence="1">3.1.26.4</ecNumber>
    </recommendedName>
</protein>
<accession>Q3YR62</accession>
<dbReference type="EC" id="3.1.26.4" evidence="1"/>
<dbReference type="EMBL" id="CP000107">
    <property type="protein sequence ID" value="AAZ68793.1"/>
    <property type="molecule type" value="Genomic_DNA"/>
</dbReference>
<dbReference type="RefSeq" id="WP_011304870.1">
    <property type="nucleotide sequence ID" value="NC_007354.1"/>
</dbReference>
<dbReference type="SMR" id="Q3YR62"/>
<dbReference type="FunCoup" id="Q3YR62">
    <property type="interactions" value="159"/>
</dbReference>
<dbReference type="STRING" id="269484.Ecaj_0761"/>
<dbReference type="KEGG" id="ecn:Ecaj_0761"/>
<dbReference type="eggNOG" id="COG0328">
    <property type="taxonomic scope" value="Bacteria"/>
</dbReference>
<dbReference type="HOGENOM" id="CLU_030894_6_0_5"/>
<dbReference type="InParanoid" id="Q3YR62"/>
<dbReference type="Proteomes" id="UP000000435">
    <property type="component" value="Chromosome"/>
</dbReference>
<dbReference type="GO" id="GO:0005737">
    <property type="term" value="C:cytoplasm"/>
    <property type="evidence" value="ECO:0007669"/>
    <property type="project" value="UniProtKB-SubCell"/>
</dbReference>
<dbReference type="GO" id="GO:0000287">
    <property type="term" value="F:magnesium ion binding"/>
    <property type="evidence" value="ECO:0007669"/>
    <property type="project" value="UniProtKB-UniRule"/>
</dbReference>
<dbReference type="GO" id="GO:0003676">
    <property type="term" value="F:nucleic acid binding"/>
    <property type="evidence" value="ECO:0007669"/>
    <property type="project" value="InterPro"/>
</dbReference>
<dbReference type="GO" id="GO:0004523">
    <property type="term" value="F:RNA-DNA hybrid ribonuclease activity"/>
    <property type="evidence" value="ECO:0007669"/>
    <property type="project" value="UniProtKB-UniRule"/>
</dbReference>
<dbReference type="GO" id="GO:0043137">
    <property type="term" value="P:DNA replication, removal of RNA primer"/>
    <property type="evidence" value="ECO:0007669"/>
    <property type="project" value="TreeGrafter"/>
</dbReference>
<dbReference type="CDD" id="cd09278">
    <property type="entry name" value="RNase_HI_prokaryote_like"/>
    <property type="match status" value="1"/>
</dbReference>
<dbReference type="FunFam" id="3.30.420.10:FF:000089">
    <property type="entry name" value="Ribonuclease H"/>
    <property type="match status" value="1"/>
</dbReference>
<dbReference type="Gene3D" id="3.30.420.10">
    <property type="entry name" value="Ribonuclease H-like superfamily/Ribonuclease H"/>
    <property type="match status" value="1"/>
</dbReference>
<dbReference type="HAMAP" id="MF_00042">
    <property type="entry name" value="RNase_H"/>
    <property type="match status" value="1"/>
</dbReference>
<dbReference type="InterPro" id="IPR050092">
    <property type="entry name" value="RNase_H"/>
</dbReference>
<dbReference type="InterPro" id="IPR012337">
    <property type="entry name" value="RNaseH-like_sf"/>
</dbReference>
<dbReference type="InterPro" id="IPR002156">
    <property type="entry name" value="RNaseH_domain"/>
</dbReference>
<dbReference type="InterPro" id="IPR036397">
    <property type="entry name" value="RNaseH_sf"/>
</dbReference>
<dbReference type="InterPro" id="IPR022892">
    <property type="entry name" value="RNaseHI"/>
</dbReference>
<dbReference type="NCBIfam" id="NF001236">
    <property type="entry name" value="PRK00203.1"/>
    <property type="match status" value="1"/>
</dbReference>
<dbReference type="PANTHER" id="PTHR10642">
    <property type="entry name" value="RIBONUCLEASE H1"/>
    <property type="match status" value="1"/>
</dbReference>
<dbReference type="PANTHER" id="PTHR10642:SF26">
    <property type="entry name" value="RIBONUCLEASE H1"/>
    <property type="match status" value="1"/>
</dbReference>
<dbReference type="Pfam" id="PF00075">
    <property type="entry name" value="RNase_H"/>
    <property type="match status" value="1"/>
</dbReference>
<dbReference type="SUPFAM" id="SSF53098">
    <property type="entry name" value="Ribonuclease H-like"/>
    <property type="match status" value="1"/>
</dbReference>
<dbReference type="PROSITE" id="PS50879">
    <property type="entry name" value="RNASE_H_1"/>
    <property type="match status" value="1"/>
</dbReference>
<organism>
    <name type="scientific">Ehrlichia canis (strain Jake)</name>
    <dbReference type="NCBI Taxonomy" id="269484"/>
    <lineage>
        <taxon>Bacteria</taxon>
        <taxon>Pseudomonadati</taxon>
        <taxon>Pseudomonadota</taxon>
        <taxon>Alphaproteobacteria</taxon>
        <taxon>Rickettsiales</taxon>
        <taxon>Anaplasmataceae</taxon>
        <taxon>Ehrlichia</taxon>
    </lineage>
</organism>
<reference key="1">
    <citation type="journal article" date="2006" name="J. Bacteriol.">
        <title>The genome of the obligately intracellular bacterium Ehrlichia canis reveals themes of complex membrane structure and immune evasion strategies.</title>
        <authorList>
            <person name="Mavromatis K."/>
            <person name="Doyle C.K."/>
            <person name="Lykidis A."/>
            <person name="Ivanova N."/>
            <person name="Francino M.P."/>
            <person name="Chain P."/>
            <person name="Shin M."/>
            <person name="Malfatti S."/>
            <person name="Larimer F."/>
            <person name="Copeland A."/>
            <person name="Detter J.C."/>
            <person name="Land M."/>
            <person name="Richardson P.M."/>
            <person name="Yu X.J."/>
            <person name="Walker D.H."/>
            <person name="McBride J.W."/>
            <person name="Kyrpides N.C."/>
        </authorList>
    </citation>
    <scope>NUCLEOTIDE SEQUENCE [LARGE SCALE GENOMIC DNA]</scope>
    <source>
        <strain>Jake</strain>
    </source>
</reference>
<keyword id="KW-0963">Cytoplasm</keyword>
<keyword id="KW-0255">Endonuclease</keyword>
<keyword id="KW-0378">Hydrolase</keyword>
<keyword id="KW-0460">Magnesium</keyword>
<keyword id="KW-0479">Metal-binding</keyword>
<keyword id="KW-0540">Nuclease</keyword>
<sequence length="146" mass="16550">MKDELNKVVIYTDGACSGNPGPGGWGAILLFDKNERTICGNNPDTTNNRMELTAVIEALKFLKVAYNVDLYTDSIYVKDGITLWIEKWKINGWRTASKLPVKNLELWLELDSLASFHNVTWYWVKAHAGNLYNQKADILARSQISK</sequence>